<keyword id="KW-0963">Cytoplasm</keyword>
<keyword id="KW-0342">GTP-binding</keyword>
<keyword id="KW-0378">Hydrolase</keyword>
<keyword id="KW-0460">Magnesium</keyword>
<keyword id="KW-0479">Metal-binding</keyword>
<keyword id="KW-0547">Nucleotide-binding</keyword>
<evidence type="ECO:0000255" key="1">
    <source>
        <dbReference type="HAMAP-Rule" id="MF_01454"/>
    </source>
</evidence>
<evidence type="ECO:0000255" key="2">
    <source>
        <dbReference type="PROSITE-ProRule" id="PRU01231"/>
    </source>
</evidence>
<organism>
    <name type="scientific">Rhodopseudomonas palustris (strain BisA53)</name>
    <dbReference type="NCBI Taxonomy" id="316055"/>
    <lineage>
        <taxon>Bacteria</taxon>
        <taxon>Pseudomonadati</taxon>
        <taxon>Pseudomonadota</taxon>
        <taxon>Alphaproteobacteria</taxon>
        <taxon>Hyphomicrobiales</taxon>
        <taxon>Nitrobacteraceae</taxon>
        <taxon>Rhodopseudomonas</taxon>
    </lineage>
</organism>
<reference key="1">
    <citation type="submission" date="2006-09" db="EMBL/GenBank/DDBJ databases">
        <title>Complete sequence of Rhodopseudomonas palustris BisA53.</title>
        <authorList>
            <consortium name="US DOE Joint Genome Institute"/>
            <person name="Copeland A."/>
            <person name="Lucas S."/>
            <person name="Lapidus A."/>
            <person name="Barry K."/>
            <person name="Detter J.C."/>
            <person name="Glavina del Rio T."/>
            <person name="Hammon N."/>
            <person name="Israni S."/>
            <person name="Dalin E."/>
            <person name="Tice H."/>
            <person name="Pitluck S."/>
            <person name="Chain P."/>
            <person name="Malfatti S."/>
            <person name="Shin M."/>
            <person name="Vergez L."/>
            <person name="Schmutz J."/>
            <person name="Larimer F."/>
            <person name="Land M."/>
            <person name="Hauser L."/>
            <person name="Pelletier D.A."/>
            <person name="Kyrpides N."/>
            <person name="Kim E."/>
            <person name="Harwood C.S."/>
            <person name="Oda Y."/>
            <person name="Richardson P."/>
        </authorList>
    </citation>
    <scope>NUCLEOTIDE SEQUENCE [LARGE SCALE GENOMIC DNA]</scope>
    <source>
        <strain>BisA53</strain>
    </source>
</reference>
<gene>
    <name evidence="1" type="primary">obg</name>
    <name type="ordered locus">RPE_0550</name>
</gene>
<proteinExistence type="inferred from homology"/>
<dbReference type="EC" id="3.6.5.-" evidence="1"/>
<dbReference type="EMBL" id="CP000463">
    <property type="protein sequence ID" value="ABJ04509.1"/>
    <property type="molecule type" value="Genomic_DNA"/>
</dbReference>
<dbReference type="SMR" id="Q07U75"/>
<dbReference type="STRING" id="316055.RPE_0550"/>
<dbReference type="KEGG" id="rpe:RPE_0550"/>
<dbReference type="eggNOG" id="COG0536">
    <property type="taxonomic scope" value="Bacteria"/>
</dbReference>
<dbReference type="HOGENOM" id="CLU_011747_2_0_5"/>
<dbReference type="OrthoDB" id="9807318at2"/>
<dbReference type="GO" id="GO:0005737">
    <property type="term" value="C:cytoplasm"/>
    <property type="evidence" value="ECO:0007669"/>
    <property type="project" value="UniProtKB-SubCell"/>
</dbReference>
<dbReference type="GO" id="GO:0005525">
    <property type="term" value="F:GTP binding"/>
    <property type="evidence" value="ECO:0007669"/>
    <property type="project" value="UniProtKB-UniRule"/>
</dbReference>
<dbReference type="GO" id="GO:0003924">
    <property type="term" value="F:GTPase activity"/>
    <property type="evidence" value="ECO:0007669"/>
    <property type="project" value="UniProtKB-UniRule"/>
</dbReference>
<dbReference type="GO" id="GO:0000287">
    <property type="term" value="F:magnesium ion binding"/>
    <property type="evidence" value="ECO:0007669"/>
    <property type="project" value="InterPro"/>
</dbReference>
<dbReference type="GO" id="GO:0042254">
    <property type="term" value="P:ribosome biogenesis"/>
    <property type="evidence" value="ECO:0007669"/>
    <property type="project" value="UniProtKB-UniRule"/>
</dbReference>
<dbReference type="CDD" id="cd01898">
    <property type="entry name" value="Obg"/>
    <property type="match status" value="1"/>
</dbReference>
<dbReference type="FunFam" id="2.70.210.12:FF:000001">
    <property type="entry name" value="GTPase Obg"/>
    <property type="match status" value="1"/>
</dbReference>
<dbReference type="Gene3D" id="2.70.210.12">
    <property type="entry name" value="GTP1/OBG domain"/>
    <property type="match status" value="1"/>
</dbReference>
<dbReference type="Gene3D" id="3.40.50.300">
    <property type="entry name" value="P-loop containing nucleotide triphosphate hydrolases"/>
    <property type="match status" value="1"/>
</dbReference>
<dbReference type="HAMAP" id="MF_01454">
    <property type="entry name" value="GTPase_Obg"/>
    <property type="match status" value="1"/>
</dbReference>
<dbReference type="InterPro" id="IPR031167">
    <property type="entry name" value="G_OBG"/>
</dbReference>
<dbReference type="InterPro" id="IPR006073">
    <property type="entry name" value="GTP-bd"/>
</dbReference>
<dbReference type="InterPro" id="IPR014100">
    <property type="entry name" value="GTP-bd_Obg/CgtA"/>
</dbReference>
<dbReference type="InterPro" id="IPR006074">
    <property type="entry name" value="GTP1-OBG_CS"/>
</dbReference>
<dbReference type="InterPro" id="IPR006169">
    <property type="entry name" value="GTP1_OBG_dom"/>
</dbReference>
<dbReference type="InterPro" id="IPR036726">
    <property type="entry name" value="GTP1_OBG_dom_sf"/>
</dbReference>
<dbReference type="InterPro" id="IPR045086">
    <property type="entry name" value="OBG_GTPase"/>
</dbReference>
<dbReference type="InterPro" id="IPR027417">
    <property type="entry name" value="P-loop_NTPase"/>
</dbReference>
<dbReference type="NCBIfam" id="TIGR02729">
    <property type="entry name" value="Obg_CgtA"/>
    <property type="match status" value="1"/>
</dbReference>
<dbReference type="NCBIfam" id="NF008955">
    <property type="entry name" value="PRK12297.1"/>
    <property type="match status" value="1"/>
</dbReference>
<dbReference type="NCBIfam" id="NF008956">
    <property type="entry name" value="PRK12299.1"/>
    <property type="match status" value="1"/>
</dbReference>
<dbReference type="PANTHER" id="PTHR11702">
    <property type="entry name" value="DEVELOPMENTALLY REGULATED GTP-BINDING PROTEIN-RELATED"/>
    <property type="match status" value="1"/>
</dbReference>
<dbReference type="PANTHER" id="PTHR11702:SF31">
    <property type="entry name" value="MITOCHONDRIAL RIBOSOME-ASSOCIATED GTPASE 2"/>
    <property type="match status" value="1"/>
</dbReference>
<dbReference type="Pfam" id="PF01018">
    <property type="entry name" value="GTP1_OBG"/>
    <property type="match status" value="1"/>
</dbReference>
<dbReference type="Pfam" id="PF01926">
    <property type="entry name" value="MMR_HSR1"/>
    <property type="match status" value="1"/>
</dbReference>
<dbReference type="PIRSF" id="PIRSF002401">
    <property type="entry name" value="GTP_bd_Obg/CgtA"/>
    <property type="match status" value="1"/>
</dbReference>
<dbReference type="PRINTS" id="PR00326">
    <property type="entry name" value="GTP1OBG"/>
</dbReference>
<dbReference type="SUPFAM" id="SSF82051">
    <property type="entry name" value="Obg GTP-binding protein N-terminal domain"/>
    <property type="match status" value="1"/>
</dbReference>
<dbReference type="SUPFAM" id="SSF52540">
    <property type="entry name" value="P-loop containing nucleoside triphosphate hydrolases"/>
    <property type="match status" value="1"/>
</dbReference>
<dbReference type="PROSITE" id="PS51710">
    <property type="entry name" value="G_OBG"/>
    <property type="match status" value="1"/>
</dbReference>
<dbReference type="PROSITE" id="PS00905">
    <property type="entry name" value="GTP1_OBG"/>
    <property type="match status" value="1"/>
</dbReference>
<dbReference type="PROSITE" id="PS51883">
    <property type="entry name" value="OBG"/>
    <property type="match status" value="1"/>
</dbReference>
<name>OBG_RHOP5</name>
<sequence length="349" mass="37603">MKFLDEAKVYIRSGDGGNGCVAFRREKYIEFGGPSGGNGGRGGDVVIEVADGLNTLIDYRYQQHFKAQKGTNGMGKDRHGANGKDIVLKVPRGTQIFDEDRETLLHDFTELGERFVLAEGGNGGFGNAHFKSSTNRAPRNANPGQEGEERWIWLRLKLIADAGLVGLPNAGKSTFLSKVSAAKPKIADYPFTTLHPQLGVVNVDGREFVLADIPGLIEGAHEGAGLGDRFLGHVERCRVLLHLIDATCEHAGKAYKTVRGELDAYAETLSDKVEIVALNKIDAVEPEELKKQRDRLKRAAKKTPLLMSGVTGQGVPEALRALVAVIGEAPVSDKAKAAADVEPWSPLTG</sequence>
<comment type="function">
    <text evidence="1">An essential GTPase which binds GTP, GDP and possibly (p)ppGpp with moderate affinity, with high nucleotide exchange rates and a fairly low GTP hydrolysis rate. Plays a role in control of the cell cycle, stress response, ribosome biogenesis and in those bacteria that undergo differentiation, in morphogenesis control.</text>
</comment>
<comment type="cofactor">
    <cofactor evidence="1">
        <name>Mg(2+)</name>
        <dbReference type="ChEBI" id="CHEBI:18420"/>
    </cofactor>
</comment>
<comment type="subunit">
    <text evidence="1">Monomer.</text>
</comment>
<comment type="subcellular location">
    <subcellularLocation>
        <location evidence="1">Cytoplasm</location>
    </subcellularLocation>
</comment>
<comment type="similarity">
    <text evidence="1">Belongs to the TRAFAC class OBG-HflX-like GTPase superfamily. OBG GTPase family.</text>
</comment>
<accession>Q07U75</accession>
<feature type="chain" id="PRO_0000386191" description="GTPase Obg">
    <location>
        <begin position="1"/>
        <end position="349"/>
    </location>
</feature>
<feature type="domain" description="Obg" evidence="2">
    <location>
        <begin position="1"/>
        <end position="159"/>
    </location>
</feature>
<feature type="domain" description="OBG-type G" evidence="1">
    <location>
        <begin position="160"/>
        <end position="327"/>
    </location>
</feature>
<feature type="binding site" evidence="1">
    <location>
        <begin position="166"/>
        <end position="173"/>
    </location>
    <ligand>
        <name>GTP</name>
        <dbReference type="ChEBI" id="CHEBI:37565"/>
    </ligand>
</feature>
<feature type="binding site" evidence="1">
    <location>
        <position position="173"/>
    </location>
    <ligand>
        <name>Mg(2+)</name>
        <dbReference type="ChEBI" id="CHEBI:18420"/>
    </ligand>
</feature>
<feature type="binding site" evidence="1">
    <location>
        <begin position="191"/>
        <end position="195"/>
    </location>
    <ligand>
        <name>GTP</name>
        <dbReference type="ChEBI" id="CHEBI:37565"/>
    </ligand>
</feature>
<feature type="binding site" evidence="1">
    <location>
        <position position="193"/>
    </location>
    <ligand>
        <name>Mg(2+)</name>
        <dbReference type="ChEBI" id="CHEBI:18420"/>
    </ligand>
</feature>
<feature type="binding site" evidence="1">
    <location>
        <begin position="212"/>
        <end position="215"/>
    </location>
    <ligand>
        <name>GTP</name>
        <dbReference type="ChEBI" id="CHEBI:37565"/>
    </ligand>
</feature>
<feature type="binding site" evidence="1">
    <location>
        <begin position="279"/>
        <end position="282"/>
    </location>
    <ligand>
        <name>GTP</name>
        <dbReference type="ChEBI" id="CHEBI:37565"/>
    </ligand>
</feature>
<feature type="binding site" evidence="1">
    <location>
        <begin position="308"/>
        <end position="310"/>
    </location>
    <ligand>
        <name>GTP</name>
        <dbReference type="ChEBI" id="CHEBI:37565"/>
    </ligand>
</feature>
<protein>
    <recommendedName>
        <fullName evidence="1">GTPase Obg</fullName>
        <ecNumber evidence="1">3.6.5.-</ecNumber>
    </recommendedName>
    <alternativeName>
        <fullName evidence="1">GTP-binding protein Obg</fullName>
    </alternativeName>
</protein>